<protein>
    <recommendedName>
        <fullName evidence="1">UPF0145 protein YbjQ</fullName>
    </recommendedName>
</protein>
<comment type="similarity">
    <text evidence="1">Belongs to the UPF0145 family.</text>
</comment>
<sequence length="107" mass="11437">MQFSTTPTLEGQTIVEYCGVVTGEAILGANIFRDFFAGIRDIVGGRSGAYEKELRKAREIAFEELGSQARALGADAVVGIDIDYETVGQNGSMLMVSVSGTAVKTRR</sequence>
<gene>
    <name evidence="1" type="primary">ybjQ</name>
    <name type="ordered locus">SDY_2397</name>
</gene>
<dbReference type="EMBL" id="CP000034">
    <property type="protein sequence ID" value="ABB62471.1"/>
    <property type="molecule type" value="Genomic_DNA"/>
</dbReference>
<dbReference type="RefSeq" id="WP_001160737.1">
    <property type="nucleotide sequence ID" value="NC_007606.1"/>
</dbReference>
<dbReference type="RefSeq" id="YP_403962.1">
    <property type="nucleotide sequence ID" value="NC_007606.1"/>
</dbReference>
<dbReference type="SMR" id="Q32DY4"/>
<dbReference type="STRING" id="300267.SDY_2397"/>
<dbReference type="EnsemblBacteria" id="ABB62471">
    <property type="protein sequence ID" value="ABB62471"/>
    <property type="gene ID" value="SDY_2397"/>
</dbReference>
<dbReference type="KEGG" id="sdy:SDY_2397"/>
<dbReference type="PATRIC" id="fig|300267.13.peg.2890"/>
<dbReference type="HOGENOM" id="CLU_117144_3_0_6"/>
<dbReference type="Proteomes" id="UP000002716">
    <property type="component" value="Chromosome"/>
</dbReference>
<dbReference type="Gene3D" id="3.30.110.70">
    <property type="entry name" value="Hypothetical protein apc22750. Chain B"/>
    <property type="match status" value="1"/>
</dbReference>
<dbReference type="HAMAP" id="MF_00338">
    <property type="entry name" value="UPF0145"/>
    <property type="match status" value="1"/>
</dbReference>
<dbReference type="InterPro" id="IPR035439">
    <property type="entry name" value="UPF0145_dom_sf"/>
</dbReference>
<dbReference type="InterPro" id="IPR002765">
    <property type="entry name" value="UPF0145_YbjQ-like"/>
</dbReference>
<dbReference type="NCBIfam" id="NF002776">
    <property type="entry name" value="PRK02877.1"/>
    <property type="match status" value="1"/>
</dbReference>
<dbReference type="PANTHER" id="PTHR34068">
    <property type="entry name" value="UPF0145 PROTEIN YBJQ"/>
    <property type="match status" value="1"/>
</dbReference>
<dbReference type="PANTHER" id="PTHR34068:SF1">
    <property type="entry name" value="UPF0145 PROTEIN YBJQ"/>
    <property type="match status" value="1"/>
</dbReference>
<dbReference type="Pfam" id="PF01906">
    <property type="entry name" value="YbjQ_1"/>
    <property type="match status" value="1"/>
</dbReference>
<dbReference type="SUPFAM" id="SSF117782">
    <property type="entry name" value="YbjQ-like"/>
    <property type="match status" value="1"/>
</dbReference>
<organism>
    <name type="scientific">Shigella dysenteriae serotype 1 (strain Sd197)</name>
    <dbReference type="NCBI Taxonomy" id="300267"/>
    <lineage>
        <taxon>Bacteria</taxon>
        <taxon>Pseudomonadati</taxon>
        <taxon>Pseudomonadota</taxon>
        <taxon>Gammaproteobacteria</taxon>
        <taxon>Enterobacterales</taxon>
        <taxon>Enterobacteriaceae</taxon>
        <taxon>Shigella</taxon>
    </lineage>
</organism>
<feature type="chain" id="PRO_0000225845" description="UPF0145 protein YbjQ">
    <location>
        <begin position="1"/>
        <end position="107"/>
    </location>
</feature>
<keyword id="KW-1185">Reference proteome</keyword>
<evidence type="ECO:0000255" key="1">
    <source>
        <dbReference type="HAMAP-Rule" id="MF_00338"/>
    </source>
</evidence>
<accession>Q32DY4</accession>
<name>YBJQ_SHIDS</name>
<proteinExistence type="inferred from homology"/>
<reference key="1">
    <citation type="journal article" date="2005" name="Nucleic Acids Res.">
        <title>Genome dynamics and diversity of Shigella species, the etiologic agents of bacillary dysentery.</title>
        <authorList>
            <person name="Yang F."/>
            <person name="Yang J."/>
            <person name="Zhang X."/>
            <person name="Chen L."/>
            <person name="Jiang Y."/>
            <person name="Yan Y."/>
            <person name="Tang X."/>
            <person name="Wang J."/>
            <person name="Xiong Z."/>
            <person name="Dong J."/>
            <person name="Xue Y."/>
            <person name="Zhu Y."/>
            <person name="Xu X."/>
            <person name="Sun L."/>
            <person name="Chen S."/>
            <person name="Nie H."/>
            <person name="Peng J."/>
            <person name="Xu J."/>
            <person name="Wang Y."/>
            <person name="Yuan Z."/>
            <person name="Wen Y."/>
            <person name="Yao Z."/>
            <person name="Shen Y."/>
            <person name="Qiang B."/>
            <person name="Hou Y."/>
            <person name="Yu J."/>
            <person name="Jin Q."/>
        </authorList>
    </citation>
    <scope>NUCLEOTIDE SEQUENCE [LARGE SCALE GENOMIC DNA]</scope>
    <source>
        <strain>Sd197</strain>
    </source>
</reference>